<feature type="chain" id="PRO_0000268550" description="Bifunctional protein FolD">
    <location>
        <begin position="1"/>
        <end position="285"/>
    </location>
</feature>
<feature type="binding site" evidence="1">
    <location>
        <begin position="164"/>
        <end position="166"/>
    </location>
    <ligand>
        <name>NADP(+)</name>
        <dbReference type="ChEBI" id="CHEBI:58349"/>
    </ligand>
</feature>
<feature type="binding site" evidence="1">
    <location>
        <position position="189"/>
    </location>
    <ligand>
        <name>NADP(+)</name>
        <dbReference type="ChEBI" id="CHEBI:58349"/>
    </ligand>
</feature>
<feature type="binding site" evidence="1">
    <location>
        <position position="230"/>
    </location>
    <ligand>
        <name>NADP(+)</name>
        <dbReference type="ChEBI" id="CHEBI:58349"/>
    </ligand>
</feature>
<comment type="function">
    <text evidence="1">Catalyzes the oxidation of 5,10-methylenetetrahydrofolate to 5,10-methenyltetrahydrofolate and then the hydrolysis of 5,10-methenyltetrahydrofolate to 10-formyltetrahydrofolate.</text>
</comment>
<comment type="catalytic activity">
    <reaction evidence="1">
        <text>(6R)-5,10-methylene-5,6,7,8-tetrahydrofolate + NADP(+) = (6R)-5,10-methenyltetrahydrofolate + NADPH</text>
        <dbReference type="Rhea" id="RHEA:22812"/>
        <dbReference type="ChEBI" id="CHEBI:15636"/>
        <dbReference type="ChEBI" id="CHEBI:57455"/>
        <dbReference type="ChEBI" id="CHEBI:57783"/>
        <dbReference type="ChEBI" id="CHEBI:58349"/>
        <dbReference type="EC" id="1.5.1.5"/>
    </reaction>
</comment>
<comment type="catalytic activity">
    <reaction evidence="1">
        <text>(6R)-5,10-methenyltetrahydrofolate + H2O = (6R)-10-formyltetrahydrofolate + H(+)</text>
        <dbReference type="Rhea" id="RHEA:23700"/>
        <dbReference type="ChEBI" id="CHEBI:15377"/>
        <dbReference type="ChEBI" id="CHEBI:15378"/>
        <dbReference type="ChEBI" id="CHEBI:57455"/>
        <dbReference type="ChEBI" id="CHEBI:195366"/>
        <dbReference type="EC" id="3.5.4.9"/>
    </reaction>
</comment>
<comment type="pathway">
    <text evidence="1">One-carbon metabolism; tetrahydrofolate interconversion.</text>
</comment>
<comment type="subunit">
    <text evidence="1">Homodimer.</text>
</comment>
<comment type="similarity">
    <text evidence="1">Belongs to the tetrahydrofolate dehydrogenase/cyclohydrolase family.</text>
</comment>
<keyword id="KW-0028">Amino-acid biosynthesis</keyword>
<keyword id="KW-0368">Histidine biosynthesis</keyword>
<keyword id="KW-0378">Hydrolase</keyword>
<keyword id="KW-0486">Methionine biosynthesis</keyword>
<keyword id="KW-0511">Multifunctional enzyme</keyword>
<keyword id="KW-0521">NADP</keyword>
<keyword id="KW-0554">One-carbon metabolism</keyword>
<keyword id="KW-0560">Oxidoreductase</keyword>
<keyword id="KW-0658">Purine biosynthesis</keyword>
<keyword id="KW-1185">Reference proteome</keyword>
<proteinExistence type="inferred from homology"/>
<accession>Q30RJ0</accession>
<organism>
    <name type="scientific">Sulfurimonas denitrificans (strain ATCC 33889 / DSM 1251)</name>
    <name type="common">Thiomicrospira denitrificans (strain ATCC 33889 / DSM 1251)</name>
    <dbReference type="NCBI Taxonomy" id="326298"/>
    <lineage>
        <taxon>Bacteria</taxon>
        <taxon>Pseudomonadati</taxon>
        <taxon>Campylobacterota</taxon>
        <taxon>Epsilonproteobacteria</taxon>
        <taxon>Campylobacterales</taxon>
        <taxon>Sulfurimonadaceae</taxon>
        <taxon>Sulfurimonas</taxon>
    </lineage>
</organism>
<sequence length="285" mass="30353">MQLLDGKALSAKIETTVAKEVKELKNSTNLVPGLAVILVGQDPASAAYVNMKKKACDRVGFYSVTHEMPSDISQSAIENTITMMNNNPNIDGILIQLPLPTQIDTTKILELVEPSKDVDGFHPYNVGRLTTGLDGFVPCTPLGVMELLKEYKIDVKGKNCVVVGASNIVGKPMAALLLNANATVEICHIFTDDLKKHTLAADMIFVGAGVINLIKEDMVKGGAIIVDIGINRAESGKLVGDVDFENVAKKCSFITPVPGGVGPMTIAMLLSNTLKAAKAHAKENE</sequence>
<protein>
    <recommendedName>
        <fullName evidence="1">Bifunctional protein FolD</fullName>
    </recommendedName>
    <domain>
        <recommendedName>
            <fullName evidence="1">Methylenetetrahydrofolate dehydrogenase</fullName>
            <ecNumber evidence="1">1.5.1.5</ecNumber>
        </recommendedName>
    </domain>
    <domain>
        <recommendedName>
            <fullName evidence="1">Methenyltetrahydrofolate cyclohydrolase</fullName>
            <ecNumber evidence="1">3.5.4.9</ecNumber>
        </recommendedName>
    </domain>
</protein>
<gene>
    <name evidence="1" type="primary">folD</name>
    <name type="ordered locus">Suden_1113</name>
</gene>
<reference key="1">
    <citation type="journal article" date="2008" name="Appl. Environ. Microbiol.">
        <title>Genome of the epsilonproteobacterial chemolithoautotroph Sulfurimonas denitrificans.</title>
        <authorList>
            <person name="Sievert S.M."/>
            <person name="Scott K.M."/>
            <person name="Klotz M.G."/>
            <person name="Chain P.S.G."/>
            <person name="Hauser L.J."/>
            <person name="Hemp J."/>
            <person name="Huegler M."/>
            <person name="Land M."/>
            <person name="Lapidus A."/>
            <person name="Larimer F.W."/>
            <person name="Lucas S."/>
            <person name="Malfatti S.A."/>
            <person name="Meyer F."/>
            <person name="Paulsen I.T."/>
            <person name="Ren Q."/>
            <person name="Simon J."/>
            <person name="Bailey K."/>
            <person name="Diaz E."/>
            <person name="Fitzpatrick K.A."/>
            <person name="Glover B."/>
            <person name="Gwatney N."/>
            <person name="Korajkic A."/>
            <person name="Long A."/>
            <person name="Mobberley J.M."/>
            <person name="Pantry S.N."/>
            <person name="Pazder G."/>
            <person name="Peterson S."/>
            <person name="Quintanilla J.D."/>
            <person name="Sprinkle R."/>
            <person name="Stephens J."/>
            <person name="Thomas P."/>
            <person name="Vaughn R."/>
            <person name="Weber M.J."/>
            <person name="Wooten L.L."/>
        </authorList>
    </citation>
    <scope>NUCLEOTIDE SEQUENCE [LARGE SCALE GENOMIC DNA]</scope>
    <source>
        <strain>ATCC 33889 / DSM 1251</strain>
    </source>
</reference>
<name>FOLD_SULDN</name>
<dbReference type="EC" id="1.5.1.5" evidence="1"/>
<dbReference type="EC" id="3.5.4.9" evidence="1"/>
<dbReference type="EMBL" id="CP000153">
    <property type="protein sequence ID" value="ABB44391.1"/>
    <property type="molecule type" value="Genomic_DNA"/>
</dbReference>
<dbReference type="RefSeq" id="WP_011372743.1">
    <property type="nucleotide sequence ID" value="NC_007575.1"/>
</dbReference>
<dbReference type="SMR" id="Q30RJ0"/>
<dbReference type="STRING" id="326298.Suden_1113"/>
<dbReference type="KEGG" id="tdn:Suden_1113"/>
<dbReference type="eggNOG" id="COG0190">
    <property type="taxonomic scope" value="Bacteria"/>
</dbReference>
<dbReference type="HOGENOM" id="CLU_034045_2_1_7"/>
<dbReference type="OrthoDB" id="9803580at2"/>
<dbReference type="UniPathway" id="UPA00193"/>
<dbReference type="Proteomes" id="UP000002714">
    <property type="component" value="Chromosome"/>
</dbReference>
<dbReference type="GO" id="GO:0005829">
    <property type="term" value="C:cytosol"/>
    <property type="evidence" value="ECO:0007669"/>
    <property type="project" value="TreeGrafter"/>
</dbReference>
<dbReference type="GO" id="GO:0004477">
    <property type="term" value="F:methenyltetrahydrofolate cyclohydrolase activity"/>
    <property type="evidence" value="ECO:0007669"/>
    <property type="project" value="UniProtKB-UniRule"/>
</dbReference>
<dbReference type="GO" id="GO:0004488">
    <property type="term" value="F:methylenetetrahydrofolate dehydrogenase (NADP+) activity"/>
    <property type="evidence" value="ECO:0007669"/>
    <property type="project" value="UniProtKB-UniRule"/>
</dbReference>
<dbReference type="GO" id="GO:0000105">
    <property type="term" value="P:L-histidine biosynthetic process"/>
    <property type="evidence" value="ECO:0007669"/>
    <property type="project" value="UniProtKB-KW"/>
</dbReference>
<dbReference type="GO" id="GO:0009086">
    <property type="term" value="P:methionine biosynthetic process"/>
    <property type="evidence" value="ECO:0007669"/>
    <property type="project" value="UniProtKB-KW"/>
</dbReference>
<dbReference type="GO" id="GO:0006164">
    <property type="term" value="P:purine nucleotide biosynthetic process"/>
    <property type="evidence" value="ECO:0007669"/>
    <property type="project" value="UniProtKB-KW"/>
</dbReference>
<dbReference type="GO" id="GO:0035999">
    <property type="term" value="P:tetrahydrofolate interconversion"/>
    <property type="evidence" value="ECO:0007669"/>
    <property type="project" value="UniProtKB-UniRule"/>
</dbReference>
<dbReference type="CDD" id="cd01080">
    <property type="entry name" value="NAD_bind_m-THF_DH_Cyclohyd"/>
    <property type="match status" value="1"/>
</dbReference>
<dbReference type="FunFam" id="3.40.50.720:FF:000094">
    <property type="entry name" value="Bifunctional protein FolD"/>
    <property type="match status" value="1"/>
</dbReference>
<dbReference type="FunFam" id="3.40.50.10860:FF:000005">
    <property type="entry name" value="C-1-tetrahydrofolate synthase, cytoplasmic, putative"/>
    <property type="match status" value="1"/>
</dbReference>
<dbReference type="Gene3D" id="3.40.50.10860">
    <property type="entry name" value="Leucine Dehydrogenase, chain A, domain 1"/>
    <property type="match status" value="1"/>
</dbReference>
<dbReference type="Gene3D" id="3.40.50.720">
    <property type="entry name" value="NAD(P)-binding Rossmann-like Domain"/>
    <property type="match status" value="1"/>
</dbReference>
<dbReference type="HAMAP" id="MF_01576">
    <property type="entry name" value="THF_DHG_CYH"/>
    <property type="match status" value="1"/>
</dbReference>
<dbReference type="InterPro" id="IPR046346">
    <property type="entry name" value="Aminoacid_DH-like_N_sf"/>
</dbReference>
<dbReference type="InterPro" id="IPR036291">
    <property type="entry name" value="NAD(P)-bd_dom_sf"/>
</dbReference>
<dbReference type="InterPro" id="IPR000672">
    <property type="entry name" value="THF_DH/CycHdrlase"/>
</dbReference>
<dbReference type="InterPro" id="IPR020630">
    <property type="entry name" value="THF_DH/CycHdrlase_cat_dom"/>
</dbReference>
<dbReference type="InterPro" id="IPR020867">
    <property type="entry name" value="THF_DH/CycHdrlase_CS"/>
</dbReference>
<dbReference type="InterPro" id="IPR020631">
    <property type="entry name" value="THF_DH/CycHdrlase_NAD-bd_dom"/>
</dbReference>
<dbReference type="NCBIfam" id="NF008058">
    <property type="entry name" value="PRK10792.1"/>
    <property type="match status" value="1"/>
</dbReference>
<dbReference type="NCBIfam" id="NF010780">
    <property type="entry name" value="PRK14183.1"/>
    <property type="match status" value="1"/>
</dbReference>
<dbReference type="NCBIfam" id="NF010783">
    <property type="entry name" value="PRK14186.1"/>
    <property type="match status" value="1"/>
</dbReference>
<dbReference type="NCBIfam" id="NF010787">
    <property type="entry name" value="PRK14191.1"/>
    <property type="match status" value="1"/>
</dbReference>
<dbReference type="PANTHER" id="PTHR48099:SF5">
    <property type="entry name" value="C-1-TETRAHYDROFOLATE SYNTHASE, CYTOPLASMIC"/>
    <property type="match status" value="1"/>
</dbReference>
<dbReference type="PANTHER" id="PTHR48099">
    <property type="entry name" value="C-1-TETRAHYDROFOLATE SYNTHASE, CYTOPLASMIC-RELATED"/>
    <property type="match status" value="1"/>
</dbReference>
<dbReference type="Pfam" id="PF00763">
    <property type="entry name" value="THF_DHG_CYH"/>
    <property type="match status" value="1"/>
</dbReference>
<dbReference type="Pfam" id="PF02882">
    <property type="entry name" value="THF_DHG_CYH_C"/>
    <property type="match status" value="1"/>
</dbReference>
<dbReference type="PRINTS" id="PR00085">
    <property type="entry name" value="THFDHDRGNASE"/>
</dbReference>
<dbReference type="SUPFAM" id="SSF53223">
    <property type="entry name" value="Aminoacid dehydrogenase-like, N-terminal domain"/>
    <property type="match status" value="1"/>
</dbReference>
<dbReference type="SUPFAM" id="SSF51735">
    <property type="entry name" value="NAD(P)-binding Rossmann-fold domains"/>
    <property type="match status" value="1"/>
</dbReference>
<dbReference type="PROSITE" id="PS00767">
    <property type="entry name" value="THF_DHG_CYH_2"/>
    <property type="match status" value="1"/>
</dbReference>
<evidence type="ECO:0000255" key="1">
    <source>
        <dbReference type="HAMAP-Rule" id="MF_01576"/>
    </source>
</evidence>